<proteinExistence type="evidence at protein level"/>
<reference key="1">
    <citation type="journal article" date="2002" name="Biochim. Biophys. Acta">
        <title>Legumain from bovine kidney: its purification, molecular cloning, immunohistochemical localization and degradation of annexin II and vitamin D-binding protein.</title>
        <authorList>
            <person name="Yamane T."/>
            <person name="Takeuchi K."/>
            <person name="Yamamoto Y."/>
            <person name="Li Y.-H."/>
            <person name="Fujiwara M."/>
            <person name="Nishi K."/>
            <person name="Takahashi S."/>
            <person name="Ohkubo I."/>
        </authorList>
    </citation>
    <scope>NUCLEOTIDE SEQUENCE [MRNA]</scope>
    <scope>PROTEIN SEQUENCE OF 26-51</scope>
    <scope>FUNCTION</scope>
    <scope>CATALYTIC ACTIVITY</scope>
    <scope>TISSUE SPECIFICITY</scope>
    <scope>SUBCELLULAR LOCATION</scope>
    <source>
        <tissue>Kidney</tissue>
    </source>
</reference>
<reference key="2">
    <citation type="submission" date="2005-12" db="EMBL/GenBank/DDBJ databases">
        <authorList>
            <consortium name="NIH - Mammalian Gene Collection (MGC) project"/>
        </authorList>
    </citation>
    <scope>NUCLEOTIDE SEQUENCE [LARGE SCALE MRNA]</scope>
    <source>
        <strain>Hereford</strain>
        <tissue>Thymus</tissue>
    </source>
</reference>
<gene>
    <name type="primary">LGMN</name>
    <name type="synonym">PRSC1</name>
</gene>
<protein>
    <recommendedName>
        <fullName>Legumain</fullName>
        <ecNumber>3.4.22.34</ecNumber>
    </recommendedName>
    <alternativeName>
        <fullName>Asparaginyl endopeptidase</fullName>
    </alternativeName>
    <alternativeName>
        <fullName>Protease, cysteine 1</fullName>
    </alternativeName>
</protein>
<name>LGMN_BOVIN</name>
<evidence type="ECO:0000250" key="1">
    <source>
        <dbReference type="UniProtKB" id="O89017"/>
    </source>
</evidence>
<evidence type="ECO:0000250" key="2">
    <source>
        <dbReference type="UniProtKB" id="Q99538"/>
    </source>
</evidence>
<evidence type="ECO:0000255" key="3"/>
<evidence type="ECO:0000269" key="4">
    <source>
    </source>
</evidence>
<evidence type="ECO:0000305" key="5"/>
<organism>
    <name type="scientific">Bos taurus</name>
    <name type="common">Bovine</name>
    <dbReference type="NCBI Taxonomy" id="9913"/>
    <lineage>
        <taxon>Eukaryota</taxon>
        <taxon>Metazoa</taxon>
        <taxon>Chordata</taxon>
        <taxon>Craniata</taxon>
        <taxon>Vertebrata</taxon>
        <taxon>Euteleostomi</taxon>
        <taxon>Mammalia</taxon>
        <taxon>Eutheria</taxon>
        <taxon>Laurasiatheria</taxon>
        <taxon>Artiodactyla</taxon>
        <taxon>Ruminantia</taxon>
        <taxon>Pecora</taxon>
        <taxon>Bovidae</taxon>
        <taxon>Bovinae</taxon>
        <taxon>Bos</taxon>
    </lineage>
</organism>
<accession>Q95M12</accession>
<accession>Q2TA48</accession>
<dbReference type="EC" id="3.4.22.34"/>
<dbReference type="EMBL" id="AB060129">
    <property type="protein sequence ID" value="BAB69947.1"/>
    <property type="molecule type" value="mRNA"/>
</dbReference>
<dbReference type="EMBL" id="BC111117">
    <property type="protein sequence ID" value="AAI11118.1"/>
    <property type="molecule type" value="mRNA"/>
</dbReference>
<dbReference type="RefSeq" id="NP_776526.1">
    <property type="nucleotide sequence ID" value="NM_174101.2"/>
</dbReference>
<dbReference type="SMR" id="Q95M12"/>
<dbReference type="FunCoup" id="Q95M12">
    <property type="interactions" value="482"/>
</dbReference>
<dbReference type="STRING" id="9913.ENSBTAP00000053922"/>
<dbReference type="ChEMBL" id="CHEMBL3286062"/>
<dbReference type="MEROPS" id="C13.004"/>
<dbReference type="GlyCosmos" id="Q95M12">
    <property type="glycosylation" value="4 sites, No reported glycans"/>
</dbReference>
<dbReference type="GlyGen" id="Q95M12">
    <property type="glycosylation" value="4 sites"/>
</dbReference>
<dbReference type="PaxDb" id="9913-ENSBTAP00000053922"/>
<dbReference type="PeptideAtlas" id="Q95M12"/>
<dbReference type="GeneID" id="281281"/>
<dbReference type="KEGG" id="bta:281281"/>
<dbReference type="CTD" id="5641"/>
<dbReference type="eggNOG" id="KOG1348">
    <property type="taxonomic scope" value="Eukaryota"/>
</dbReference>
<dbReference type="HOGENOM" id="CLU_024160_2_0_1"/>
<dbReference type="InParanoid" id="Q95M12"/>
<dbReference type="OrthoDB" id="192611at2759"/>
<dbReference type="TreeFam" id="TF313403"/>
<dbReference type="BRENDA" id="3.4.22.34">
    <property type="organism ID" value="908"/>
</dbReference>
<dbReference type="Proteomes" id="UP000009136">
    <property type="component" value="Unplaced"/>
</dbReference>
<dbReference type="GO" id="GO:0043202">
    <property type="term" value="C:lysosomal lumen"/>
    <property type="evidence" value="ECO:0000250"/>
    <property type="project" value="UniProtKB"/>
</dbReference>
<dbReference type="GO" id="GO:0005764">
    <property type="term" value="C:lysosome"/>
    <property type="evidence" value="ECO:0000250"/>
    <property type="project" value="UniProtKB"/>
</dbReference>
<dbReference type="GO" id="GO:0004197">
    <property type="term" value="F:cysteine-type endopeptidase activity"/>
    <property type="evidence" value="ECO:0000250"/>
    <property type="project" value="UniProtKB"/>
</dbReference>
<dbReference type="GO" id="GO:0019886">
    <property type="term" value="P:antigen processing and presentation of exogenous peptide antigen via MHC class II"/>
    <property type="evidence" value="ECO:0000250"/>
    <property type="project" value="UniProtKB"/>
</dbReference>
<dbReference type="GO" id="GO:1901185">
    <property type="term" value="P:negative regulation of ERBB signaling pathway"/>
    <property type="evidence" value="ECO:0000250"/>
    <property type="project" value="UniProtKB"/>
</dbReference>
<dbReference type="GO" id="GO:0006508">
    <property type="term" value="P:proteolysis"/>
    <property type="evidence" value="ECO:0000250"/>
    <property type="project" value="UniProtKB"/>
</dbReference>
<dbReference type="GO" id="GO:0051603">
    <property type="term" value="P:proteolysis involved in protein catabolic process"/>
    <property type="evidence" value="ECO:0000250"/>
    <property type="project" value="UniProtKB"/>
</dbReference>
<dbReference type="GO" id="GO:0032801">
    <property type="term" value="P:receptor catabolic process"/>
    <property type="evidence" value="ECO:0000250"/>
    <property type="project" value="UniProtKB"/>
</dbReference>
<dbReference type="GO" id="GO:0003014">
    <property type="term" value="P:renal system process"/>
    <property type="evidence" value="ECO:0000250"/>
    <property type="project" value="UniProtKB"/>
</dbReference>
<dbReference type="GO" id="GO:0006624">
    <property type="term" value="P:vacuolar protein processing"/>
    <property type="evidence" value="ECO:0000318"/>
    <property type="project" value="GO_Central"/>
</dbReference>
<dbReference type="CDD" id="cd21115">
    <property type="entry name" value="legumain_C"/>
    <property type="match status" value="1"/>
</dbReference>
<dbReference type="FunFam" id="3.40.50.1460:FF:000006">
    <property type="entry name" value="Legumain"/>
    <property type="match status" value="1"/>
</dbReference>
<dbReference type="FunFam" id="1.10.132.130:FF:000002">
    <property type="entry name" value="Legumain preproprotein"/>
    <property type="match status" value="1"/>
</dbReference>
<dbReference type="Gene3D" id="1.10.132.130">
    <property type="match status" value="1"/>
</dbReference>
<dbReference type="Gene3D" id="3.40.50.1460">
    <property type="match status" value="1"/>
</dbReference>
<dbReference type="InterPro" id="IPR043577">
    <property type="entry name" value="AE"/>
</dbReference>
<dbReference type="InterPro" id="IPR048501">
    <property type="entry name" value="Legum_prodom"/>
</dbReference>
<dbReference type="InterPro" id="IPR046427">
    <property type="entry name" value="Legumain_prodom_sf"/>
</dbReference>
<dbReference type="InterPro" id="IPR001096">
    <property type="entry name" value="Peptidase_C13"/>
</dbReference>
<dbReference type="PANTHER" id="PTHR12000">
    <property type="entry name" value="HEMOGLOBINASE FAMILY MEMBER"/>
    <property type="match status" value="1"/>
</dbReference>
<dbReference type="PANTHER" id="PTHR12000:SF42">
    <property type="entry name" value="LEGUMAIN"/>
    <property type="match status" value="1"/>
</dbReference>
<dbReference type="Pfam" id="PF20985">
    <property type="entry name" value="Legum_prodom"/>
    <property type="match status" value="1"/>
</dbReference>
<dbReference type="Pfam" id="PF01650">
    <property type="entry name" value="Peptidase_C13"/>
    <property type="match status" value="1"/>
</dbReference>
<dbReference type="PIRSF" id="PIRSF500139">
    <property type="entry name" value="AE"/>
    <property type="match status" value="1"/>
</dbReference>
<dbReference type="PIRSF" id="PIRSF019663">
    <property type="entry name" value="Legumain"/>
    <property type="match status" value="1"/>
</dbReference>
<dbReference type="PRINTS" id="PR00776">
    <property type="entry name" value="HEMOGLOBNASE"/>
</dbReference>
<comment type="function">
    <text evidence="1 2 4">Has a strict specificity for hydrolysis of asparaginyl bonds (PubMed:11983426). Can also cleave aspartyl bonds slowly, especially under acidic conditions (By similarity). Involved in the processing of proteins for MHC class II antigen presentation in the lysosomal/endosomal system (By similarity). Also involved in MHC class I antigen presentation in cross-presenting dendritic cells by mediating cleavage and maturation of Perforin-2 (MPEG1), thereby promoting antigen translocation in the cytosol (By similarity). Required for normal lysosomal protein degradation in renal proximal tubules (By similarity). Required for normal degradation of internalized EGFR (By similarity). Plays a role in the regulation of cell proliferation via its role in EGFR degradation (By similarity).</text>
</comment>
<comment type="catalytic activity">
    <reaction evidence="4">
        <text>Hydrolysis of proteins and small molecule substrates at -Asn-|-Xaa- bonds.</text>
        <dbReference type="EC" id="3.4.22.34"/>
    </reaction>
</comment>
<comment type="subunit">
    <text evidence="2">Homodimer before autocatalytic removal of the propeptide. Monomer after autocatalytic processing. May interact with integrins.</text>
</comment>
<comment type="subcellular location">
    <subcellularLocation>
        <location evidence="4">Lysosome</location>
    </subcellularLocation>
</comment>
<comment type="tissue specificity">
    <text evidence="4">Detected in kidney (at protein level).</text>
</comment>
<comment type="domain">
    <text evidence="2">In the zymogen form, the uncleaved propeptide blocks access to the active site.</text>
</comment>
<comment type="PTM">
    <text evidence="2">Activated by autocatalytic processing at pH 4.</text>
</comment>
<comment type="similarity">
    <text evidence="5">Belongs to the peptidase C13 family.</text>
</comment>
<sequence length="433" mass="49284">MIWEFTVLLSLVLGTGAVPLEDPEDGGKHWVVIVAGSNGWYNYRHQADACHAYQIVHRNGIPDEQIIVMMYDDIANSEDNPTPGIVINRPNGSDVYQGVLKDYTGEDVTPKNFLAVLRGDAEAVKGVGSGKVLKSGPRDHVFVYFTDHGATGILVFPNEDLHVKDLNETIRYMYEHKMYQKMVFYIEACESGSMMNHLPPDINVYATTAANPRESSYACYYDEQRSTFLGDWYSVNWMEDSDVEDLTKETLHKQYQLVKSHTNTSHVMQYGNKSISAMKLMQFQGLKHQASSPISLPAVSRLDLTPSPEVPLSIMKRKLMSTNDLQESRRLVQKIDRHLEARNIIEKSVRKIVTLVSGSAAEVDRLLSQRAPLTEHACYQTAVSHFRSHCFNWHNPTYEYALRHLYVLVNLCENPYPIDRIKLSMNKVCHGYY</sequence>
<keyword id="KW-0903">Direct protein sequencing</keyword>
<keyword id="KW-1015">Disulfide bond</keyword>
<keyword id="KW-0325">Glycoprotein</keyword>
<keyword id="KW-0378">Hydrolase</keyword>
<keyword id="KW-0458">Lysosome</keyword>
<keyword id="KW-0645">Protease</keyword>
<keyword id="KW-1185">Reference proteome</keyword>
<keyword id="KW-0732">Signal</keyword>
<keyword id="KW-0788">Thiol protease</keyword>
<keyword id="KW-0865">Zymogen</keyword>
<feature type="signal peptide" evidence="2">
    <location>
        <begin position="1"/>
        <end position="17"/>
    </location>
</feature>
<feature type="propeptide" id="PRO_0000259469" evidence="4">
    <location>
        <begin position="18"/>
        <end position="25"/>
    </location>
</feature>
<feature type="chain" id="PRO_0000259470" description="Legumain">
    <location>
        <begin position="26"/>
        <end position="323"/>
    </location>
</feature>
<feature type="propeptide" id="PRO_0000259471" evidence="1">
    <location>
        <begin position="324"/>
        <end position="433"/>
    </location>
</feature>
<feature type="active site" evidence="1">
    <location>
        <position position="148"/>
    </location>
</feature>
<feature type="active site" description="Nucleophile" evidence="1">
    <location>
        <position position="189"/>
    </location>
</feature>
<feature type="site" description="Cleavage; by autolysis" evidence="1">
    <location>
        <begin position="323"/>
        <end position="324"/>
    </location>
</feature>
<feature type="glycosylation site" description="N-linked (GlcNAc...) asparagine" evidence="3">
    <location>
        <position position="91"/>
    </location>
</feature>
<feature type="glycosylation site" description="N-linked (GlcNAc...) asparagine" evidence="3">
    <location>
        <position position="167"/>
    </location>
</feature>
<feature type="glycosylation site" description="N-linked (GlcNAc...) asparagine" evidence="3">
    <location>
        <position position="263"/>
    </location>
</feature>
<feature type="glycosylation site" description="N-linked (GlcNAc...) asparagine" evidence="3">
    <location>
        <position position="272"/>
    </location>
</feature>
<feature type="disulfide bond" evidence="1">
    <location>
        <begin position="378"/>
        <end position="412"/>
    </location>
</feature>
<feature type="disulfide bond" evidence="1">
    <location>
        <begin position="390"/>
        <end position="429"/>
    </location>
</feature>
<feature type="sequence conflict" description="In Ref. 2; AAI11118." evidence="5" ref="2">
    <original>F</original>
    <variation>V</variation>
    <location>
        <position position="5"/>
    </location>
</feature>